<proteinExistence type="inferred from homology"/>
<name>MNHG1_STAAE</name>
<accession>A6QFF6</accession>
<sequence length="118" mass="12819">MIKIILISLALIFVIIGALISALAAIGLLRLEDVYSRAHAAGKASTLGAMSLLFGTFLYFIATQGFVNMQLIVAIIFVLITGPLSSHMIMKAAYNIKTPYTKKTKVDEISEDLKDTKL</sequence>
<evidence type="ECO:0000250" key="1"/>
<evidence type="ECO:0000255" key="2"/>
<evidence type="ECO:0000305" key="3"/>
<gene>
    <name type="primary">mnhG1</name>
    <name type="ordered locus">NWMN_0816</name>
</gene>
<feature type="chain" id="PRO_0000372166" description="Na(+)/H(+) antiporter subunit G1">
    <location>
        <begin position="1"/>
        <end position="118"/>
    </location>
</feature>
<feature type="transmembrane region" description="Helical" evidence="2">
    <location>
        <begin position="4"/>
        <end position="24"/>
    </location>
</feature>
<feature type="transmembrane region" description="Helical" evidence="2">
    <location>
        <begin position="38"/>
        <end position="58"/>
    </location>
</feature>
<feature type="transmembrane region" description="Helical" evidence="2">
    <location>
        <begin position="60"/>
        <end position="80"/>
    </location>
</feature>
<dbReference type="EMBL" id="AP009351">
    <property type="protein sequence ID" value="BAF67088.1"/>
    <property type="molecule type" value="Genomic_DNA"/>
</dbReference>
<dbReference type="RefSeq" id="WP_000590451.1">
    <property type="nucleotide sequence ID" value="NZ_JBBIAE010000002.1"/>
</dbReference>
<dbReference type="SMR" id="A6QFF6"/>
<dbReference type="GeneID" id="98345267"/>
<dbReference type="KEGG" id="sae:NWMN_0816"/>
<dbReference type="HOGENOM" id="CLU_121334_0_3_9"/>
<dbReference type="Proteomes" id="UP000006386">
    <property type="component" value="Chromosome"/>
</dbReference>
<dbReference type="GO" id="GO:0005886">
    <property type="term" value="C:plasma membrane"/>
    <property type="evidence" value="ECO:0007669"/>
    <property type="project" value="UniProtKB-SubCell"/>
</dbReference>
<dbReference type="GO" id="GO:0015385">
    <property type="term" value="F:sodium:proton antiporter activity"/>
    <property type="evidence" value="ECO:0007669"/>
    <property type="project" value="TreeGrafter"/>
</dbReference>
<dbReference type="InterPro" id="IPR005133">
    <property type="entry name" value="PhaG_MnhG_YufB"/>
</dbReference>
<dbReference type="NCBIfam" id="TIGR01300">
    <property type="entry name" value="CPA3_mnhG_phaG"/>
    <property type="match status" value="1"/>
</dbReference>
<dbReference type="NCBIfam" id="NF009237">
    <property type="entry name" value="PRK12587.1"/>
    <property type="match status" value="1"/>
</dbReference>
<dbReference type="NCBIfam" id="NF009314">
    <property type="entry name" value="PRK12674.1-2"/>
    <property type="match status" value="1"/>
</dbReference>
<dbReference type="PANTHER" id="PTHR34703">
    <property type="entry name" value="ANTIPORTER SUBUNIT MNHG2-RELATED"/>
    <property type="match status" value="1"/>
</dbReference>
<dbReference type="PANTHER" id="PTHR34703:SF1">
    <property type="entry name" value="ANTIPORTER SUBUNIT MNHG2-RELATED"/>
    <property type="match status" value="1"/>
</dbReference>
<dbReference type="Pfam" id="PF03334">
    <property type="entry name" value="PhaG_MnhG_YufB"/>
    <property type="match status" value="1"/>
</dbReference>
<keyword id="KW-0050">Antiport</keyword>
<keyword id="KW-1003">Cell membrane</keyword>
<keyword id="KW-0375">Hydrogen ion transport</keyword>
<keyword id="KW-0406">Ion transport</keyword>
<keyword id="KW-0472">Membrane</keyword>
<keyword id="KW-0915">Sodium</keyword>
<keyword id="KW-0739">Sodium transport</keyword>
<keyword id="KW-0812">Transmembrane</keyword>
<keyword id="KW-1133">Transmembrane helix</keyword>
<keyword id="KW-0813">Transport</keyword>
<comment type="function">
    <text evidence="1">Mnh complex is a Na(+)/H(+) antiporter involved in Na(+) excretion.</text>
</comment>
<comment type="subunit">
    <text evidence="1">May form a heterooligomeric complex that consists of seven subunits: mnhA1, mnhB1, mnhC1, mnhD1, mnhE1, mnhF1 and mnhG1.</text>
</comment>
<comment type="subcellular location">
    <subcellularLocation>
        <location evidence="3">Cell membrane</location>
        <topology evidence="3">Multi-pass membrane protein</topology>
    </subcellularLocation>
</comment>
<comment type="similarity">
    <text evidence="3">Belongs to the CPA3 antiporters (TC 2.A.63) subunit G family.</text>
</comment>
<protein>
    <recommendedName>
        <fullName>Na(+)/H(+) antiporter subunit G1</fullName>
    </recommendedName>
    <alternativeName>
        <fullName>Mnh complex subunit G1</fullName>
    </alternativeName>
</protein>
<organism>
    <name type="scientific">Staphylococcus aureus (strain Newman)</name>
    <dbReference type="NCBI Taxonomy" id="426430"/>
    <lineage>
        <taxon>Bacteria</taxon>
        <taxon>Bacillati</taxon>
        <taxon>Bacillota</taxon>
        <taxon>Bacilli</taxon>
        <taxon>Bacillales</taxon>
        <taxon>Staphylococcaceae</taxon>
        <taxon>Staphylococcus</taxon>
    </lineage>
</organism>
<reference key="1">
    <citation type="journal article" date="2008" name="J. Bacteriol.">
        <title>Genome sequence of Staphylococcus aureus strain Newman and comparative analysis of staphylococcal genomes: polymorphism and evolution of two major pathogenicity islands.</title>
        <authorList>
            <person name="Baba T."/>
            <person name="Bae T."/>
            <person name="Schneewind O."/>
            <person name="Takeuchi F."/>
            <person name="Hiramatsu K."/>
        </authorList>
    </citation>
    <scope>NUCLEOTIDE SEQUENCE [LARGE SCALE GENOMIC DNA]</scope>
    <source>
        <strain>Newman</strain>
    </source>
</reference>